<reference key="1">
    <citation type="journal article" date="2002" name="Trends Plant Sci.">
        <title>bZIP transcription factors in Arabidopsis.</title>
        <authorList>
            <person name="Jakoby M."/>
            <person name="Weisshaar B."/>
            <person name="Droege-Laser W."/>
            <person name="Vicente-Carbajosa J."/>
            <person name="Tiedemann J."/>
            <person name="Kroj T."/>
            <person name="Parcy F."/>
        </authorList>
    </citation>
    <scope>NUCLEOTIDE SEQUENCE [MRNA]</scope>
    <scope>GENE FAMILY</scope>
    <scope>NOMENCLATURE</scope>
</reference>
<reference key="2">
    <citation type="journal article" date="1999" name="Nature">
        <title>Sequence and analysis of chromosome 2 of the plant Arabidopsis thaliana.</title>
        <authorList>
            <person name="Lin X."/>
            <person name="Kaul S."/>
            <person name="Rounsley S.D."/>
            <person name="Shea T.P."/>
            <person name="Benito M.-I."/>
            <person name="Town C.D."/>
            <person name="Fujii C.Y."/>
            <person name="Mason T.M."/>
            <person name="Bowman C.L."/>
            <person name="Barnstead M.E."/>
            <person name="Feldblyum T.V."/>
            <person name="Buell C.R."/>
            <person name="Ketchum K.A."/>
            <person name="Lee J.J."/>
            <person name="Ronning C.M."/>
            <person name="Koo H.L."/>
            <person name="Moffat K.S."/>
            <person name="Cronin L.A."/>
            <person name="Shen M."/>
            <person name="Pai G."/>
            <person name="Van Aken S."/>
            <person name="Umayam L."/>
            <person name="Tallon L.J."/>
            <person name="Gill J.E."/>
            <person name="Adams M.D."/>
            <person name="Carrera A.J."/>
            <person name="Creasy T.H."/>
            <person name="Goodman H.M."/>
            <person name="Somerville C.R."/>
            <person name="Copenhaver G.P."/>
            <person name="Preuss D."/>
            <person name="Nierman W.C."/>
            <person name="White O."/>
            <person name="Eisen J.A."/>
            <person name="Salzberg S.L."/>
            <person name="Fraser C.M."/>
            <person name="Venter J.C."/>
        </authorList>
    </citation>
    <scope>NUCLEOTIDE SEQUENCE [LARGE SCALE GENOMIC DNA]</scope>
    <source>
        <strain>cv. Columbia</strain>
    </source>
</reference>
<reference key="3">
    <citation type="journal article" date="2017" name="Plant J.">
        <title>Araport11: a complete reannotation of the Arabidopsis thaliana reference genome.</title>
        <authorList>
            <person name="Cheng C.Y."/>
            <person name="Krishnakumar V."/>
            <person name="Chan A.P."/>
            <person name="Thibaud-Nissen F."/>
            <person name="Schobel S."/>
            <person name="Town C.D."/>
        </authorList>
    </citation>
    <scope>GENOME REANNOTATION</scope>
    <source>
        <strain>cv. Columbia</strain>
    </source>
</reference>
<reference key="4">
    <citation type="journal article" date="2003" name="Science">
        <title>Empirical analysis of transcriptional activity in the Arabidopsis genome.</title>
        <authorList>
            <person name="Yamada K."/>
            <person name="Lim J."/>
            <person name="Dale J.M."/>
            <person name="Chen H."/>
            <person name="Shinn P."/>
            <person name="Palm C.J."/>
            <person name="Southwick A.M."/>
            <person name="Wu H.C."/>
            <person name="Kim C.J."/>
            <person name="Nguyen M."/>
            <person name="Pham P.K."/>
            <person name="Cheuk R.F."/>
            <person name="Karlin-Newmann G."/>
            <person name="Liu S.X."/>
            <person name="Lam B."/>
            <person name="Sakano H."/>
            <person name="Wu T."/>
            <person name="Yu G."/>
            <person name="Miranda M."/>
            <person name="Quach H.L."/>
            <person name="Tripp M."/>
            <person name="Chang C.H."/>
            <person name="Lee J.M."/>
            <person name="Toriumi M.J."/>
            <person name="Chan M.M."/>
            <person name="Tang C.C."/>
            <person name="Onodera C.S."/>
            <person name="Deng J.M."/>
            <person name="Akiyama K."/>
            <person name="Ansari Y."/>
            <person name="Arakawa T."/>
            <person name="Banh J."/>
            <person name="Banno F."/>
            <person name="Bowser L."/>
            <person name="Brooks S.Y."/>
            <person name="Carninci P."/>
            <person name="Chao Q."/>
            <person name="Choy N."/>
            <person name="Enju A."/>
            <person name="Goldsmith A.D."/>
            <person name="Gurjal M."/>
            <person name="Hansen N.F."/>
            <person name="Hayashizaki Y."/>
            <person name="Johnson-Hopson C."/>
            <person name="Hsuan V.W."/>
            <person name="Iida K."/>
            <person name="Karnes M."/>
            <person name="Khan S."/>
            <person name="Koesema E."/>
            <person name="Ishida J."/>
            <person name="Jiang P.X."/>
            <person name="Jones T."/>
            <person name="Kawai J."/>
            <person name="Kamiya A."/>
            <person name="Meyers C."/>
            <person name="Nakajima M."/>
            <person name="Narusaka M."/>
            <person name="Seki M."/>
            <person name="Sakurai T."/>
            <person name="Satou M."/>
            <person name="Tamse R."/>
            <person name="Vaysberg M."/>
            <person name="Wallender E.K."/>
            <person name="Wong C."/>
            <person name="Yamamura Y."/>
            <person name="Yuan S."/>
            <person name="Shinozaki K."/>
            <person name="Davis R.W."/>
            <person name="Theologis A."/>
            <person name="Ecker J.R."/>
        </authorList>
    </citation>
    <scope>NUCLEOTIDE SEQUENCE [LARGE SCALE MRNA]</scope>
    <source>
        <strain>cv. Columbia</strain>
    </source>
</reference>
<reference key="5">
    <citation type="journal article" date="2009" name="J. Proteomics">
        <title>Phosphoproteomic analysis of nuclei-enriched fractions from Arabidopsis thaliana.</title>
        <authorList>
            <person name="Jones A.M.E."/>
            <person name="MacLean D."/>
            <person name="Studholme D.J."/>
            <person name="Serna-Sanz A."/>
            <person name="Andreasson E."/>
            <person name="Rathjen J.P."/>
            <person name="Peck S.C."/>
        </authorList>
    </citation>
    <scope>IDENTIFICATION BY MASS SPECTROMETRY [LARGE SCALE ANALYSIS]</scope>
</reference>
<reference key="6">
    <citation type="journal article" date="2009" name="Plant Physiol.">
        <title>Large-scale Arabidopsis phosphoproteome profiling reveals novel chloroplast kinase substrates and phosphorylation networks.</title>
        <authorList>
            <person name="Reiland S."/>
            <person name="Messerli G."/>
            <person name="Baerenfaller K."/>
            <person name="Gerrits B."/>
            <person name="Endler A."/>
            <person name="Grossmann J."/>
            <person name="Gruissem W."/>
            <person name="Baginsky S."/>
        </authorList>
    </citation>
    <scope>IDENTIFICATION BY MASS SPECTROMETRY [LARGE SCALE ANALYSIS]</scope>
</reference>
<reference key="7">
    <citation type="journal article" date="2016" name="Plant J.">
        <title>Altered expression of the bZIP transcription factor DRINK ME affects growth and reproductive development in Arabidopsis thaliana.</title>
        <authorList>
            <person name="Lozano-Sotomayor P."/>
            <person name="Chavez Montes R.A."/>
            <person name="Silvestre-Vano M."/>
            <person name="Herrera-Ubaldo H."/>
            <person name="Greco R."/>
            <person name="Pablo-Villa J."/>
            <person name="Galliani B.M."/>
            <person name="Diaz-Ramirez D."/>
            <person name="Weemen M."/>
            <person name="Boutilier K."/>
            <person name="Pereira A."/>
            <person name="Colombo L."/>
            <person name="Madueno F."/>
            <person name="Marsch-Martinez N."/>
            <person name="de Folter S."/>
        </authorList>
    </citation>
    <scope>FUNCTION</scope>
    <scope>INTERACTION WITH WUS; HEC1; KNAT1; KNAT2; HAT1; BEL1 AND NGA1</scope>
    <scope>SUBCELLULAR LOCATION</scope>
    <scope>TISSUE SPECIFICITY</scope>
    <scope>DISRUPTION PHENOTYPE</scope>
</reference>
<dbReference type="EMBL" id="AF401298">
    <property type="protein sequence ID" value="AAK84221.1"/>
    <property type="molecule type" value="mRNA"/>
</dbReference>
<dbReference type="EMBL" id="AC007142">
    <property type="protein sequence ID" value="AAD24827.1"/>
    <property type="molecule type" value="Genomic_DNA"/>
</dbReference>
<dbReference type="EMBL" id="CP002685">
    <property type="protein sequence ID" value="AEC07142.1"/>
    <property type="molecule type" value="Genomic_DNA"/>
</dbReference>
<dbReference type="EMBL" id="CP002685">
    <property type="protein sequence ID" value="ANM61685.1"/>
    <property type="molecule type" value="Genomic_DNA"/>
</dbReference>
<dbReference type="EMBL" id="AY054497">
    <property type="protein sequence ID" value="AAK96688.1"/>
    <property type="molecule type" value="mRNA"/>
</dbReference>
<dbReference type="EMBL" id="AY093268">
    <property type="protein sequence ID" value="AAM13267.1"/>
    <property type="molecule type" value="mRNA"/>
</dbReference>
<dbReference type="PIR" id="G84598">
    <property type="entry name" value="G84598"/>
</dbReference>
<dbReference type="RefSeq" id="NP_001323888.1">
    <property type="nucleotide sequence ID" value="NM_001335736.1"/>
</dbReference>
<dbReference type="RefSeq" id="NP_179719.1">
    <property type="nucleotide sequence ID" value="NM_127695.3"/>
</dbReference>
<dbReference type="SMR" id="Q9SIG8"/>
<dbReference type="FunCoup" id="Q9SIG8">
    <property type="interactions" value="444"/>
</dbReference>
<dbReference type="IntAct" id="Q9SIG8">
    <property type="interactions" value="9"/>
</dbReference>
<dbReference type="GlyGen" id="Q9SIG8">
    <property type="glycosylation" value="1 site, 1 O-linked glycan (1 site)"/>
</dbReference>
<dbReference type="iPTMnet" id="Q9SIG8"/>
<dbReference type="MetOSite" id="Q9SIG8"/>
<dbReference type="ProteomicsDB" id="181629"/>
<dbReference type="EnsemblPlants" id="AT2G21230.1">
    <property type="protein sequence ID" value="AT2G21230.1"/>
    <property type="gene ID" value="AT2G21230"/>
</dbReference>
<dbReference type="EnsemblPlants" id="AT2G21230.4">
    <property type="protein sequence ID" value="AT2G21230.4"/>
    <property type="gene ID" value="AT2G21230"/>
</dbReference>
<dbReference type="GeneID" id="816660"/>
<dbReference type="Gramene" id="AT2G21230.1">
    <property type="protein sequence ID" value="AT2G21230.1"/>
    <property type="gene ID" value="AT2G21230"/>
</dbReference>
<dbReference type="Gramene" id="AT2G21230.4">
    <property type="protein sequence ID" value="AT2G21230.4"/>
    <property type="gene ID" value="AT2G21230"/>
</dbReference>
<dbReference type="KEGG" id="ath:AT2G21230"/>
<dbReference type="Araport" id="AT2G21230"/>
<dbReference type="TAIR" id="AT2G21230">
    <property type="gene designation" value="BZIP30"/>
</dbReference>
<dbReference type="InParanoid" id="Q9SIG8"/>
<dbReference type="PhylomeDB" id="Q9SIG8"/>
<dbReference type="PRO" id="PR:Q9SIG8"/>
<dbReference type="Proteomes" id="UP000006548">
    <property type="component" value="Chromosome 2"/>
</dbReference>
<dbReference type="ExpressionAtlas" id="Q9SIG8">
    <property type="expression patterns" value="baseline and differential"/>
</dbReference>
<dbReference type="GO" id="GO:0005634">
    <property type="term" value="C:nucleus"/>
    <property type="evidence" value="ECO:0000314"/>
    <property type="project" value="UniProtKB"/>
</dbReference>
<dbReference type="GO" id="GO:0003677">
    <property type="term" value="F:DNA binding"/>
    <property type="evidence" value="ECO:0007669"/>
    <property type="project" value="UniProtKB-KW"/>
</dbReference>
<dbReference type="GO" id="GO:0003700">
    <property type="term" value="F:DNA-binding transcription factor activity"/>
    <property type="evidence" value="ECO:0007669"/>
    <property type="project" value="InterPro"/>
</dbReference>
<dbReference type="GO" id="GO:0010629">
    <property type="term" value="P:negative regulation of gene expression"/>
    <property type="evidence" value="ECO:0000315"/>
    <property type="project" value="UniProtKB"/>
</dbReference>
<dbReference type="GO" id="GO:0010628">
    <property type="term" value="P:positive regulation of gene expression"/>
    <property type="evidence" value="ECO:0000315"/>
    <property type="project" value="UniProtKB"/>
</dbReference>
<dbReference type="GO" id="GO:0090567">
    <property type="term" value="P:reproductive shoot system development"/>
    <property type="evidence" value="ECO:0000315"/>
    <property type="project" value="UniProtKB"/>
</dbReference>
<dbReference type="CDD" id="cd14703">
    <property type="entry name" value="bZIP_plant_RF2"/>
    <property type="match status" value="1"/>
</dbReference>
<dbReference type="FunFam" id="1.20.5.170:FF:000009">
    <property type="entry name" value="probable transcription factor PosF21"/>
    <property type="match status" value="1"/>
</dbReference>
<dbReference type="Gene3D" id="1.20.5.170">
    <property type="match status" value="1"/>
</dbReference>
<dbReference type="InterPro" id="IPR004827">
    <property type="entry name" value="bZIP"/>
</dbReference>
<dbReference type="InterPro" id="IPR044759">
    <property type="entry name" value="bZIP_RF2"/>
</dbReference>
<dbReference type="InterPro" id="IPR046347">
    <property type="entry name" value="bZIP_sf"/>
</dbReference>
<dbReference type="PANTHER" id="PTHR13690:SF159">
    <property type="entry name" value="BZIP TRANSCRIPTION FACTOR 30"/>
    <property type="match status" value="1"/>
</dbReference>
<dbReference type="PANTHER" id="PTHR13690">
    <property type="entry name" value="TRANSCRIPTION FACTOR POSF21-RELATED"/>
    <property type="match status" value="1"/>
</dbReference>
<dbReference type="Pfam" id="PF00170">
    <property type="entry name" value="bZIP_1"/>
    <property type="match status" value="1"/>
</dbReference>
<dbReference type="SMART" id="SM00338">
    <property type="entry name" value="BRLZ"/>
    <property type="match status" value="1"/>
</dbReference>
<dbReference type="SUPFAM" id="SSF57959">
    <property type="entry name" value="Leucine zipper domain"/>
    <property type="match status" value="1"/>
</dbReference>
<dbReference type="PROSITE" id="PS50217">
    <property type="entry name" value="BZIP"/>
    <property type="match status" value="1"/>
</dbReference>
<name>BZP30_ARATH</name>
<proteinExistence type="evidence at protein level"/>
<evidence type="ECO:0000255" key="1"/>
<evidence type="ECO:0000255" key="2">
    <source>
        <dbReference type="PROSITE-ProRule" id="PRU00978"/>
    </source>
</evidence>
<evidence type="ECO:0000256" key="3">
    <source>
        <dbReference type="SAM" id="MobiDB-lite"/>
    </source>
</evidence>
<evidence type="ECO:0000269" key="4">
    <source>
    </source>
</evidence>
<evidence type="ECO:0000303" key="5">
    <source>
    </source>
</evidence>
<evidence type="ECO:0000303" key="6">
    <source>
    </source>
</evidence>
<evidence type="ECO:0000312" key="7">
    <source>
        <dbReference type="Araport" id="AT2G21230"/>
    </source>
</evidence>
<evidence type="ECO:0000312" key="8">
    <source>
        <dbReference type="EMBL" id="AAD24827.1"/>
    </source>
</evidence>
<keyword id="KW-0010">Activator</keyword>
<keyword id="KW-0175">Coiled coil</keyword>
<keyword id="KW-0238">DNA-binding</keyword>
<keyword id="KW-0341">Growth regulation</keyword>
<keyword id="KW-0539">Nucleus</keyword>
<keyword id="KW-1185">Reference proteome</keyword>
<keyword id="KW-0678">Repressor</keyword>
<keyword id="KW-0804">Transcription</keyword>
<keyword id="KW-0805">Transcription regulation</keyword>
<feature type="chain" id="PRO_0000451165" description="bZIP transcription factor 30">
    <location>
        <begin position="1"/>
        <end position="519"/>
    </location>
</feature>
<feature type="region of interest" description="Disordered" evidence="3">
    <location>
        <begin position="1"/>
        <end position="30"/>
    </location>
</feature>
<feature type="region of interest" description="Disordered" evidence="3">
    <location>
        <begin position="45"/>
        <end position="83"/>
    </location>
</feature>
<feature type="region of interest" description="Disordered" evidence="3">
    <location>
        <begin position="108"/>
        <end position="202"/>
    </location>
</feature>
<feature type="region of interest" description="Disordered" evidence="3">
    <location>
        <begin position="222"/>
        <end position="295"/>
    </location>
</feature>
<feature type="region of interest" description="Disordered" evidence="3">
    <location>
        <begin position="315"/>
        <end position="339"/>
    </location>
</feature>
<feature type="region of interest" description="Basic motif" evidence="2">
    <location>
        <begin position="372"/>
        <end position="393"/>
    </location>
</feature>
<feature type="region of interest" description="Leucine-zipper" evidence="2">
    <location>
        <begin position="398"/>
        <end position="433"/>
    </location>
</feature>
<feature type="region of interest" description="Disordered" evidence="3">
    <location>
        <begin position="465"/>
        <end position="519"/>
    </location>
</feature>
<feature type="coiled-coil region" evidence="1">
    <location>
        <begin position="386"/>
        <end position="460"/>
    </location>
</feature>
<feature type="compositionally biased region" description="Pro residues" evidence="3">
    <location>
        <begin position="51"/>
        <end position="61"/>
    </location>
</feature>
<feature type="compositionally biased region" description="Polar residues" evidence="3">
    <location>
        <begin position="149"/>
        <end position="173"/>
    </location>
</feature>
<feature type="compositionally biased region" description="Basic and acidic residues" evidence="3">
    <location>
        <begin position="187"/>
        <end position="202"/>
    </location>
</feature>
<feature type="compositionally biased region" description="Low complexity" evidence="3">
    <location>
        <begin position="244"/>
        <end position="268"/>
    </location>
</feature>
<feature type="compositionally biased region" description="Low complexity" evidence="3">
    <location>
        <begin position="317"/>
        <end position="329"/>
    </location>
</feature>
<feature type="compositionally biased region" description="Polar residues" evidence="3">
    <location>
        <begin position="330"/>
        <end position="339"/>
    </location>
</feature>
<feature type="compositionally biased region" description="Low complexity" evidence="3">
    <location>
        <begin position="473"/>
        <end position="483"/>
    </location>
</feature>
<feature type="compositionally biased region" description="Low complexity" evidence="3">
    <location>
        <begin position="490"/>
        <end position="509"/>
    </location>
</feature>
<gene>
    <name evidence="5" type="primary">BZIP30</name>
    <name evidence="6" type="synonym">DKM</name>
    <name evidence="7" type="ordered locus">At2g21230</name>
    <name evidence="8" type="ORF">F7O24.5</name>
</gene>
<organism>
    <name type="scientific">Arabidopsis thaliana</name>
    <name type="common">Mouse-ear cress</name>
    <dbReference type="NCBI Taxonomy" id="3702"/>
    <lineage>
        <taxon>Eukaryota</taxon>
        <taxon>Viridiplantae</taxon>
        <taxon>Streptophyta</taxon>
        <taxon>Embryophyta</taxon>
        <taxon>Tracheophyta</taxon>
        <taxon>Spermatophyta</taxon>
        <taxon>Magnoliopsida</taxon>
        <taxon>eudicotyledons</taxon>
        <taxon>Gunneridae</taxon>
        <taxon>Pentapetalae</taxon>
        <taxon>rosids</taxon>
        <taxon>malvids</taxon>
        <taxon>Brassicales</taxon>
        <taxon>Brassicaceae</taxon>
        <taxon>Camelineae</taxon>
        <taxon>Arabidopsis</taxon>
    </lineage>
</organism>
<accession>Q9SIG8</accession>
<accession>A0A178VTL1</accession>
<sequence>MGGGGDTTDTNMMQRVNSSSGTSSSSIPKHNLHLNPALIRSHHHFRHPFTGAPPPPIPPISPYSQIPATLQPRHSRSMSQPSSFFSFDSLPPLNPSAPSVSVSVEEKTGAGFSPSLPPSPFTMCHSSSSRNAGDGENLPPRKSHRRSNSDVTFGFSSMMSQNQKSPPLSSLERSISGEDTSDWSNLVKKEPREGFYKGRKPEVEAAMDDVFTAYMNLDNIDVLNSFGGEDGKNGNENVEEMESSRGSGTKKTNGGSSSDSEGDSSASGNVKVALSSSSSGVKRRAGGDIAPTGRHYRSVSMDSCFMGKLNFGDESSLKLPPSSSAKVSPTNSGEGNSSAYSVEFGNSEFTAAEMKKIAADEKLAEIVMADPKRVKRILANRVSAARSKERKTRYMAELEHKVQTLQTEATTLSAQLTHLQRDSMGLTNQNSELKFRLQAMEQQAQLRDALSEKLNEEVQRLKLVIGEPNRRQSGSSSSESKMSLNPEMFQQLSISQLQHQQMQHSNQCSTMKAKHTSND</sequence>
<comment type="function">
    <text evidence="4">Transcription factor that acts as a repressor of reproductive development, meristem size and plant growth (PubMed:27402171). Acts as a transcriptional repressor in inflorescence tissues (PubMed:27402171). Interacts with well known regulators of meristem and gynoecium development such as WUS, HEC1, KNAT1, KNAT2, HAT1, BEL1 and NGA1 (PubMed:27402171). Acts as a positive regulator of JAG and OFP1 expression in developing gynoecia (PubMed:27402171).</text>
</comment>
<comment type="subunit">
    <text evidence="4">Interacts with WUS, HEC1, KNAT1, KNAT2, HAT1, BEL1, and NGA1.</text>
</comment>
<comment type="subcellular location">
    <subcellularLocation>
        <location evidence="4">Nucleus</location>
    </subcellularLocation>
</comment>
<comment type="tissue specificity">
    <text evidence="4">Expressed in inflorescence meristem, floral organ primordia, gynoecia, ovules and carpel margin meristem.</text>
</comment>
<comment type="disruption phenotype">
    <text evidence="4">Increased size of rosette leaves, increased plant height, increased number of floral buds and increased length of siliques.</text>
</comment>
<comment type="miscellaneous">
    <text evidence="4">Plants overexpressing BZIP29 exhibit altered reproductive development, such as a reduction in the number of floral buds, reduction in ovule production with underdeveloped transmitting tract and altered or aborted development of ovules.</text>
</comment>
<protein>
    <recommendedName>
        <fullName evidence="5">bZIP transcription factor 30</fullName>
        <shortName evidence="5">AtbZIP30</shortName>
    </recommendedName>
    <alternativeName>
        <fullName evidence="6">Protein DRINK ME</fullName>
    </alternativeName>
</protein>